<name>PYRF_STRZT</name>
<keyword id="KW-0210">Decarboxylase</keyword>
<keyword id="KW-0456">Lyase</keyword>
<keyword id="KW-0665">Pyrimidine biosynthesis</keyword>
<organism>
    <name type="scientific">Streptococcus pneumoniae (strain Taiwan19F-14)</name>
    <dbReference type="NCBI Taxonomy" id="487213"/>
    <lineage>
        <taxon>Bacteria</taxon>
        <taxon>Bacillati</taxon>
        <taxon>Bacillota</taxon>
        <taxon>Bacilli</taxon>
        <taxon>Lactobacillales</taxon>
        <taxon>Streptococcaceae</taxon>
        <taxon>Streptococcus</taxon>
    </lineage>
</organism>
<sequence length="233" mass="25409">MREHRPIIALDFPSFEAVKEFLALFPAEESLYLKVGMELYYAAGPEIVSYLKGLGHSVFLDLKLHDIPNTVKSAMKVLSQLGVDMTNVHAAGGVEMMKAAREGLGSQAKLIAVTQLTSTSEAQMQEFQNIQTSLQESVIHYAKKTAEAGLDGVVCSAQEVQVIKQATNPDFICLTPGIRPAGVAVGDQKRVMTPADAYQIGSDYIVVGRPITQAEDPVAAYHAIKDEWTQDWN</sequence>
<evidence type="ECO:0000255" key="1">
    <source>
        <dbReference type="HAMAP-Rule" id="MF_01200"/>
    </source>
</evidence>
<comment type="function">
    <text evidence="1">Catalyzes the decarboxylation of orotidine 5'-monophosphate (OMP) to uridine 5'-monophosphate (UMP).</text>
</comment>
<comment type="catalytic activity">
    <reaction evidence="1">
        <text>orotidine 5'-phosphate + H(+) = UMP + CO2</text>
        <dbReference type="Rhea" id="RHEA:11596"/>
        <dbReference type="ChEBI" id="CHEBI:15378"/>
        <dbReference type="ChEBI" id="CHEBI:16526"/>
        <dbReference type="ChEBI" id="CHEBI:57538"/>
        <dbReference type="ChEBI" id="CHEBI:57865"/>
        <dbReference type="EC" id="4.1.1.23"/>
    </reaction>
</comment>
<comment type="pathway">
    <text evidence="1">Pyrimidine metabolism; UMP biosynthesis via de novo pathway; UMP from orotate: step 2/2.</text>
</comment>
<comment type="subunit">
    <text evidence="1">Homodimer.</text>
</comment>
<comment type="similarity">
    <text evidence="1">Belongs to the OMP decarboxylase family. Type 1 subfamily.</text>
</comment>
<protein>
    <recommendedName>
        <fullName evidence="1">Orotidine 5'-phosphate decarboxylase</fullName>
        <ecNumber evidence="1">4.1.1.23</ecNumber>
    </recommendedName>
    <alternativeName>
        <fullName evidence="1">OMP decarboxylase</fullName>
        <shortName evidence="1">OMPDCase</shortName>
        <shortName evidence="1">OMPdecase</shortName>
    </alternativeName>
</protein>
<proteinExistence type="inferred from homology"/>
<reference key="1">
    <citation type="journal article" date="2010" name="Genome Biol.">
        <title>Structure and dynamics of the pan-genome of Streptococcus pneumoniae and closely related species.</title>
        <authorList>
            <person name="Donati C."/>
            <person name="Hiller N.L."/>
            <person name="Tettelin H."/>
            <person name="Muzzi A."/>
            <person name="Croucher N.J."/>
            <person name="Angiuoli S.V."/>
            <person name="Oggioni M."/>
            <person name="Dunning Hotopp J.C."/>
            <person name="Hu F.Z."/>
            <person name="Riley D.R."/>
            <person name="Covacci A."/>
            <person name="Mitchell T.J."/>
            <person name="Bentley S.D."/>
            <person name="Kilian M."/>
            <person name="Ehrlich G.D."/>
            <person name="Rappuoli R."/>
            <person name="Moxon E.R."/>
            <person name="Masignani V."/>
        </authorList>
    </citation>
    <scope>NUCLEOTIDE SEQUENCE [LARGE SCALE GENOMIC DNA]</scope>
    <source>
        <strain>Taiwan19F-14</strain>
    </source>
</reference>
<dbReference type="EC" id="4.1.1.23" evidence="1"/>
<dbReference type="EMBL" id="CP000921">
    <property type="protein sequence ID" value="ACO22740.1"/>
    <property type="molecule type" value="Genomic_DNA"/>
</dbReference>
<dbReference type="RefSeq" id="WP_001206717.1">
    <property type="nucleotide sequence ID" value="NC_012469.1"/>
</dbReference>
<dbReference type="SMR" id="C1CQG7"/>
<dbReference type="GeneID" id="45653917"/>
<dbReference type="KEGG" id="snt:SPT_0713"/>
<dbReference type="HOGENOM" id="CLU_067069_1_1_9"/>
<dbReference type="UniPathway" id="UPA00070">
    <property type="reaction ID" value="UER00120"/>
</dbReference>
<dbReference type="GO" id="GO:0005829">
    <property type="term" value="C:cytosol"/>
    <property type="evidence" value="ECO:0007669"/>
    <property type="project" value="TreeGrafter"/>
</dbReference>
<dbReference type="GO" id="GO:0004590">
    <property type="term" value="F:orotidine-5'-phosphate decarboxylase activity"/>
    <property type="evidence" value="ECO:0007669"/>
    <property type="project" value="UniProtKB-UniRule"/>
</dbReference>
<dbReference type="GO" id="GO:0006207">
    <property type="term" value="P:'de novo' pyrimidine nucleobase biosynthetic process"/>
    <property type="evidence" value="ECO:0007669"/>
    <property type="project" value="InterPro"/>
</dbReference>
<dbReference type="GO" id="GO:0044205">
    <property type="term" value="P:'de novo' UMP biosynthetic process"/>
    <property type="evidence" value="ECO:0007669"/>
    <property type="project" value="UniProtKB-UniRule"/>
</dbReference>
<dbReference type="CDD" id="cd04725">
    <property type="entry name" value="OMP_decarboxylase_like"/>
    <property type="match status" value="1"/>
</dbReference>
<dbReference type="FunFam" id="3.20.20.70:FF:000015">
    <property type="entry name" value="Orotidine 5'-phosphate decarboxylase"/>
    <property type="match status" value="1"/>
</dbReference>
<dbReference type="Gene3D" id="3.20.20.70">
    <property type="entry name" value="Aldolase class I"/>
    <property type="match status" value="1"/>
</dbReference>
<dbReference type="HAMAP" id="MF_01200_B">
    <property type="entry name" value="OMPdecase_type1_B"/>
    <property type="match status" value="1"/>
</dbReference>
<dbReference type="InterPro" id="IPR013785">
    <property type="entry name" value="Aldolase_TIM"/>
</dbReference>
<dbReference type="InterPro" id="IPR014732">
    <property type="entry name" value="OMPdecase"/>
</dbReference>
<dbReference type="InterPro" id="IPR018089">
    <property type="entry name" value="OMPdecase_AS"/>
</dbReference>
<dbReference type="InterPro" id="IPR047596">
    <property type="entry name" value="OMPdecase_bac"/>
</dbReference>
<dbReference type="InterPro" id="IPR001754">
    <property type="entry name" value="OMPdeCOase_dom"/>
</dbReference>
<dbReference type="InterPro" id="IPR011060">
    <property type="entry name" value="RibuloseP-bd_barrel"/>
</dbReference>
<dbReference type="NCBIfam" id="NF001273">
    <property type="entry name" value="PRK00230.1"/>
    <property type="match status" value="1"/>
</dbReference>
<dbReference type="NCBIfam" id="TIGR01740">
    <property type="entry name" value="pyrF"/>
    <property type="match status" value="1"/>
</dbReference>
<dbReference type="PANTHER" id="PTHR32119">
    <property type="entry name" value="OROTIDINE 5'-PHOSPHATE DECARBOXYLASE"/>
    <property type="match status" value="1"/>
</dbReference>
<dbReference type="PANTHER" id="PTHR32119:SF2">
    <property type="entry name" value="OROTIDINE 5'-PHOSPHATE DECARBOXYLASE"/>
    <property type="match status" value="1"/>
</dbReference>
<dbReference type="Pfam" id="PF00215">
    <property type="entry name" value="OMPdecase"/>
    <property type="match status" value="1"/>
</dbReference>
<dbReference type="SMART" id="SM00934">
    <property type="entry name" value="OMPdecase"/>
    <property type="match status" value="1"/>
</dbReference>
<dbReference type="SUPFAM" id="SSF51366">
    <property type="entry name" value="Ribulose-phoshate binding barrel"/>
    <property type="match status" value="1"/>
</dbReference>
<dbReference type="PROSITE" id="PS00156">
    <property type="entry name" value="OMPDECASE"/>
    <property type="match status" value="1"/>
</dbReference>
<feature type="chain" id="PRO_1000164585" description="Orotidine 5'-phosphate decarboxylase">
    <location>
        <begin position="1"/>
        <end position="233"/>
    </location>
</feature>
<feature type="active site" description="Proton donor" evidence="1">
    <location>
        <position position="63"/>
    </location>
</feature>
<feature type="binding site" evidence="1">
    <location>
        <position position="11"/>
    </location>
    <ligand>
        <name>substrate</name>
    </ligand>
</feature>
<feature type="binding site" evidence="1">
    <location>
        <position position="34"/>
    </location>
    <ligand>
        <name>substrate</name>
    </ligand>
</feature>
<feature type="binding site" evidence="1">
    <location>
        <begin position="61"/>
        <end position="70"/>
    </location>
    <ligand>
        <name>substrate</name>
    </ligand>
</feature>
<feature type="binding site" evidence="1">
    <location>
        <position position="117"/>
    </location>
    <ligand>
        <name>substrate</name>
    </ligand>
</feature>
<feature type="binding site" evidence="1">
    <location>
        <position position="179"/>
    </location>
    <ligand>
        <name>substrate</name>
    </ligand>
</feature>
<feature type="binding site" evidence="1">
    <location>
        <position position="188"/>
    </location>
    <ligand>
        <name>substrate</name>
    </ligand>
</feature>
<feature type="binding site" evidence="1">
    <location>
        <position position="208"/>
    </location>
    <ligand>
        <name>substrate</name>
    </ligand>
</feature>
<feature type="binding site" evidence="1">
    <location>
        <position position="209"/>
    </location>
    <ligand>
        <name>substrate</name>
    </ligand>
</feature>
<accession>C1CQG7</accession>
<gene>
    <name evidence="1" type="primary">pyrF</name>
    <name type="ordered locus">SPT_0713</name>
</gene>